<gene>
    <name evidence="1" type="primary">plsY</name>
    <name type="ordered locus">WS0004</name>
</gene>
<feature type="chain" id="PRO_0000188492" description="Glycerol-3-phosphate acyltransferase">
    <location>
        <begin position="1"/>
        <end position="208"/>
    </location>
</feature>
<feature type="transmembrane region" description="Helical" evidence="1">
    <location>
        <begin position="7"/>
        <end position="27"/>
    </location>
</feature>
<feature type="transmembrane region" description="Helical" evidence="1">
    <location>
        <begin position="63"/>
        <end position="83"/>
    </location>
</feature>
<feature type="transmembrane region" description="Helical" evidence="1">
    <location>
        <begin position="86"/>
        <end position="106"/>
    </location>
</feature>
<feature type="transmembrane region" description="Helical" evidence="1">
    <location>
        <begin position="123"/>
        <end position="143"/>
    </location>
</feature>
<feature type="transmembrane region" description="Helical" evidence="1">
    <location>
        <begin position="149"/>
        <end position="169"/>
    </location>
</feature>
<feature type="transmembrane region" description="Helical" evidence="1">
    <location>
        <begin position="170"/>
        <end position="190"/>
    </location>
</feature>
<protein>
    <recommendedName>
        <fullName evidence="1">Glycerol-3-phosphate acyltransferase</fullName>
    </recommendedName>
    <alternativeName>
        <fullName evidence="1">Acyl-PO4 G3P acyltransferase</fullName>
    </alternativeName>
    <alternativeName>
        <fullName evidence="1">Acyl-phosphate--glycerol-3-phosphate acyltransferase</fullName>
    </alternativeName>
    <alternativeName>
        <fullName evidence="1">G3P acyltransferase</fullName>
        <shortName evidence="1">GPAT</shortName>
        <ecNumber evidence="1">2.3.1.275</ecNumber>
    </alternativeName>
    <alternativeName>
        <fullName evidence="1">Lysophosphatidic acid synthase</fullName>
        <shortName evidence="1">LPA synthase</shortName>
    </alternativeName>
</protein>
<proteinExistence type="inferred from homology"/>
<dbReference type="EC" id="2.3.1.275" evidence="1"/>
<dbReference type="EMBL" id="BX571657">
    <property type="protein sequence ID" value="CAE09178.1"/>
    <property type="molecule type" value="Genomic_DNA"/>
</dbReference>
<dbReference type="RefSeq" id="WP_011137978.1">
    <property type="nucleotide sequence ID" value="NC_005090.1"/>
</dbReference>
<dbReference type="SMR" id="Q7MAV0"/>
<dbReference type="STRING" id="273121.WS0004"/>
<dbReference type="KEGG" id="wsu:WS0004"/>
<dbReference type="eggNOG" id="COG0344">
    <property type="taxonomic scope" value="Bacteria"/>
</dbReference>
<dbReference type="HOGENOM" id="CLU_081254_2_0_7"/>
<dbReference type="UniPathway" id="UPA00085"/>
<dbReference type="Proteomes" id="UP000000422">
    <property type="component" value="Chromosome"/>
</dbReference>
<dbReference type="GO" id="GO:0005886">
    <property type="term" value="C:plasma membrane"/>
    <property type="evidence" value="ECO:0007669"/>
    <property type="project" value="UniProtKB-SubCell"/>
</dbReference>
<dbReference type="GO" id="GO:0043772">
    <property type="term" value="F:acyl-phosphate glycerol-3-phosphate acyltransferase activity"/>
    <property type="evidence" value="ECO:0007669"/>
    <property type="project" value="UniProtKB-UniRule"/>
</dbReference>
<dbReference type="GO" id="GO:0008654">
    <property type="term" value="P:phospholipid biosynthetic process"/>
    <property type="evidence" value="ECO:0007669"/>
    <property type="project" value="UniProtKB-UniRule"/>
</dbReference>
<dbReference type="HAMAP" id="MF_01043">
    <property type="entry name" value="PlsY"/>
    <property type="match status" value="1"/>
</dbReference>
<dbReference type="InterPro" id="IPR003811">
    <property type="entry name" value="G3P_acylTferase_PlsY"/>
</dbReference>
<dbReference type="NCBIfam" id="TIGR00023">
    <property type="entry name" value="glycerol-3-phosphate 1-O-acyltransferase PlsY"/>
    <property type="match status" value="1"/>
</dbReference>
<dbReference type="PANTHER" id="PTHR30309:SF0">
    <property type="entry name" value="GLYCEROL-3-PHOSPHATE ACYLTRANSFERASE-RELATED"/>
    <property type="match status" value="1"/>
</dbReference>
<dbReference type="PANTHER" id="PTHR30309">
    <property type="entry name" value="INNER MEMBRANE PROTEIN YGIH"/>
    <property type="match status" value="1"/>
</dbReference>
<dbReference type="Pfam" id="PF02660">
    <property type="entry name" value="G3P_acyltransf"/>
    <property type="match status" value="1"/>
</dbReference>
<dbReference type="SMART" id="SM01207">
    <property type="entry name" value="G3P_acyltransf"/>
    <property type="match status" value="1"/>
</dbReference>
<organism>
    <name type="scientific">Wolinella succinogenes (strain ATCC 29543 / DSM 1740 / CCUG 13145 / JCM 31913 / LMG 7466 / NCTC 11488 / FDC 602W)</name>
    <name type="common">Vibrio succinogenes</name>
    <dbReference type="NCBI Taxonomy" id="273121"/>
    <lineage>
        <taxon>Bacteria</taxon>
        <taxon>Pseudomonadati</taxon>
        <taxon>Campylobacterota</taxon>
        <taxon>Epsilonproteobacteria</taxon>
        <taxon>Campylobacterales</taxon>
        <taxon>Helicobacteraceae</taxon>
        <taxon>Wolinella</taxon>
    </lineage>
</organism>
<evidence type="ECO:0000255" key="1">
    <source>
        <dbReference type="HAMAP-Rule" id="MF_01043"/>
    </source>
</evidence>
<sequence length="208" mass="22365">MSFISNPNIHFYLLAYFIGGIPFGYLLSRFFYNINLQEVGSGSIGATNVLRALKERDPKKAKMMAALTMLLDALKGALVILVAKMAGMSVETQWAIAVLAVVGHCFSPYLKLEGGKGVATGLGVMAVMLPLEAAIGLVVWLVVGKTLKISSLSSLLGLGALLISSFLIHPEIPEIGTHAPLLIIAFVIFYKHIPNLVRLFQGKEGRVV</sequence>
<keyword id="KW-0997">Cell inner membrane</keyword>
<keyword id="KW-1003">Cell membrane</keyword>
<keyword id="KW-0444">Lipid biosynthesis</keyword>
<keyword id="KW-0443">Lipid metabolism</keyword>
<keyword id="KW-0472">Membrane</keyword>
<keyword id="KW-0594">Phospholipid biosynthesis</keyword>
<keyword id="KW-1208">Phospholipid metabolism</keyword>
<keyword id="KW-1185">Reference proteome</keyword>
<keyword id="KW-0808">Transferase</keyword>
<keyword id="KW-0812">Transmembrane</keyword>
<keyword id="KW-1133">Transmembrane helix</keyword>
<name>PLSY_WOLSU</name>
<comment type="function">
    <text evidence="1">Catalyzes the transfer of an acyl group from acyl-phosphate (acyl-PO(4)) to glycerol-3-phosphate (G3P) to form lysophosphatidic acid (LPA). This enzyme utilizes acyl-phosphate as fatty acyl donor, but not acyl-CoA or acyl-ACP.</text>
</comment>
<comment type="catalytic activity">
    <reaction evidence="1">
        <text>an acyl phosphate + sn-glycerol 3-phosphate = a 1-acyl-sn-glycero-3-phosphate + phosphate</text>
        <dbReference type="Rhea" id="RHEA:34075"/>
        <dbReference type="ChEBI" id="CHEBI:43474"/>
        <dbReference type="ChEBI" id="CHEBI:57597"/>
        <dbReference type="ChEBI" id="CHEBI:57970"/>
        <dbReference type="ChEBI" id="CHEBI:59918"/>
        <dbReference type="EC" id="2.3.1.275"/>
    </reaction>
</comment>
<comment type="pathway">
    <text evidence="1">Lipid metabolism; phospholipid metabolism.</text>
</comment>
<comment type="subunit">
    <text evidence="1">Probably interacts with PlsX.</text>
</comment>
<comment type="subcellular location">
    <subcellularLocation>
        <location evidence="1">Cell inner membrane</location>
        <topology evidence="1">Multi-pass membrane protein</topology>
    </subcellularLocation>
</comment>
<comment type="similarity">
    <text evidence="1">Belongs to the PlsY family.</text>
</comment>
<accession>Q7MAV0</accession>
<reference key="1">
    <citation type="journal article" date="2003" name="Proc. Natl. Acad. Sci. U.S.A.">
        <title>Complete genome sequence and analysis of Wolinella succinogenes.</title>
        <authorList>
            <person name="Baar C."/>
            <person name="Eppinger M."/>
            <person name="Raddatz G."/>
            <person name="Simon J."/>
            <person name="Lanz C."/>
            <person name="Klimmek O."/>
            <person name="Nandakumar R."/>
            <person name="Gross R."/>
            <person name="Rosinus A."/>
            <person name="Keller H."/>
            <person name="Jagtap P."/>
            <person name="Linke B."/>
            <person name="Meyer F."/>
            <person name="Lederer H."/>
            <person name="Schuster S.C."/>
        </authorList>
    </citation>
    <scope>NUCLEOTIDE SEQUENCE [LARGE SCALE GENOMIC DNA]</scope>
    <source>
        <strain>ATCC 29543 / DSM 1740 / CCUG 13145 / JCM 31913 / LMG 7466 / NCTC 11488 / FDC 602W</strain>
    </source>
</reference>